<name>PCSK9_PANPA</name>
<dbReference type="EC" id="3.4.21.-"/>
<dbReference type="EMBL" id="EF692499">
    <property type="protein sequence ID" value="ABV59219.2"/>
    <property type="molecule type" value="mRNA"/>
</dbReference>
<dbReference type="SMR" id="A8T655"/>
<dbReference type="STRING" id="9597.ENSPPAP00000018371"/>
<dbReference type="GlyCosmos" id="A8T655">
    <property type="glycosylation" value="1 site, No reported glycans"/>
</dbReference>
<dbReference type="eggNOG" id="KOG1153">
    <property type="taxonomic scope" value="Eukaryota"/>
</dbReference>
<dbReference type="Proteomes" id="UP000240080">
    <property type="component" value="Unplaced"/>
</dbReference>
<dbReference type="GO" id="GO:0009986">
    <property type="term" value="C:cell surface"/>
    <property type="evidence" value="ECO:0000250"/>
    <property type="project" value="UniProtKB"/>
</dbReference>
<dbReference type="GO" id="GO:0005737">
    <property type="term" value="C:cytoplasm"/>
    <property type="evidence" value="ECO:0000250"/>
    <property type="project" value="UniProtKB"/>
</dbReference>
<dbReference type="GO" id="GO:0005769">
    <property type="term" value="C:early endosome"/>
    <property type="evidence" value="ECO:0000250"/>
    <property type="project" value="UniProtKB"/>
</dbReference>
<dbReference type="GO" id="GO:0005783">
    <property type="term" value="C:endoplasmic reticulum"/>
    <property type="evidence" value="ECO:0000250"/>
    <property type="project" value="UniProtKB"/>
</dbReference>
<dbReference type="GO" id="GO:0005615">
    <property type="term" value="C:extracellular space"/>
    <property type="evidence" value="ECO:0007669"/>
    <property type="project" value="TreeGrafter"/>
</dbReference>
<dbReference type="GO" id="GO:0005794">
    <property type="term" value="C:Golgi apparatus"/>
    <property type="evidence" value="ECO:0000250"/>
    <property type="project" value="UniProtKB"/>
</dbReference>
<dbReference type="GO" id="GO:0005770">
    <property type="term" value="C:late endosome"/>
    <property type="evidence" value="ECO:0000250"/>
    <property type="project" value="UniProtKB"/>
</dbReference>
<dbReference type="GO" id="GO:0005764">
    <property type="term" value="C:lysosome"/>
    <property type="evidence" value="ECO:0000250"/>
    <property type="project" value="UniProtKB"/>
</dbReference>
<dbReference type="GO" id="GO:0034185">
    <property type="term" value="F:apolipoprotein binding"/>
    <property type="evidence" value="ECO:0000250"/>
    <property type="project" value="UniProtKB"/>
</dbReference>
<dbReference type="GO" id="GO:0030169">
    <property type="term" value="F:low-density lipoprotein particle binding"/>
    <property type="evidence" value="ECO:0000250"/>
    <property type="project" value="UniProtKB"/>
</dbReference>
<dbReference type="GO" id="GO:0004252">
    <property type="term" value="F:serine-type endopeptidase activity"/>
    <property type="evidence" value="ECO:0007669"/>
    <property type="project" value="InterPro"/>
</dbReference>
<dbReference type="GO" id="GO:0034189">
    <property type="term" value="F:very-low-density lipoprotein particle binding"/>
    <property type="evidence" value="ECO:0000250"/>
    <property type="project" value="UniProtKB"/>
</dbReference>
<dbReference type="GO" id="GO:0006915">
    <property type="term" value="P:apoptotic process"/>
    <property type="evidence" value="ECO:0007669"/>
    <property type="project" value="UniProtKB-KW"/>
</dbReference>
<dbReference type="GO" id="GO:0008203">
    <property type="term" value="P:cholesterol metabolic process"/>
    <property type="evidence" value="ECO:0007669"/>
    <property type="project" value="UniProtKB-KW"/>
</dbReference>
<dbReference type="GO" id="GO:0032802">
    <property type="term" value="P:low-density lipoprotein particle receptor catabolic process"/>
    <property type="evidence" value="ECO:0000250"/>
    <property type="project" value="UniProtKB"/>
</dbReference>
<dbReference type="GO" id="GO:0006508">
    <property type="term" value="P:proteolysis"/>
    <property type="evidence" value="ECO:0007669"/>
    <property type="project" value="UniProtKB-KW"/>
</dbReference>
<dbReference type="GO" id="GO:0043523">
    <property type="term" value="P:regulation of neuron apoptotic process"/>
    <property type="evidence" value="ECO:0000250"/>
    <property type="project" value="UniProtKB"/>
</dbReference>
<dbReference type="CDD" id="cd16839">
    <property type="entry name" value="PCSK9_C-CRD"/>
    <property type="match status" value="1"/>
</dbReference>
<dbReference type="CDD" id="cd04077">
    <property type="entry name" value="Peptidases_S8_PCSK9_ProteinaseK_like"/>
    <property type="match status" value="1"/>
</dbReference>
<dbReference type="FunFam" id="2.60.120.690:FF:000001">
    <property type="entry name" value="Proprotein convertase subtilisin/kexin type 9"/>
    <property type="match status" value="1"/>
</dbReference>
<dbReference type="FunFam" id="3.30.70.80:FF:000004">
    <property type="entry name" value="Proprotein convertase subtilisin/kexin type 9"/>
    <property type="match status" value="1"/>
</dbReference>
<dbReference type="FunFam" id="3.40.50.200:FF:000016">
    <property type="entry name" value="Proprotein convertase subtilisin/kexin type 9"/>
    <property type="match status" value="1"/>
</dbReference>
<dbReference type="Gene3D" id="3.30.70.80">
    <property type="entry name" value="Peptidase S8 propeptide/proteinase inhibitor I9"/>
    <property type="match status" value="1"/>
</dbReference>
<dbReference type="Gene3D" id="3.40.50.200">
    <property type="entry name" value="Peptidase S8/S53 domain"/>
    <property type="match status" value="1"/>
</dbReference>
<dbReference type="Gene3D" id="2.60.120.690">
    <property type="entry name" value="Proprotein convertase subtilisin/kexin type 9"/>
    <property type="match status" value="1"/>
</dbReference>
<dbReference type="InterPro" id="IPR041254">
    <property type="entry name" value="PCSK9_C1"/>
</dbReference>
<dbReference type="InterPro" id="IPR041052">
    <property type="entry name" value="PCSK9_C2"/>
</dbReference>
<dbReference type="InterPro" id="IPR041051">
    <property type="entry name" value="PCSK9_C3"/>
</dbReference>
<dbReference type="InterPro" id="IPR034193">
    <property type="entry name" value="PCSK9_ProteinaseK-like"/>
</dbReference>
<dbReference type="InterPro" id="IPR000209">
    <property type="entry name" value="Peptidase_S8/S53_dom"/>
</dbReference>
<dbReference type="InterPro" id="IPR036852">
    <property type="entry name" value="Peptidase_S8/S53_dom_sf"/>
</dbReference>
<dbReference type="InterPro" id="IPR050131">
    <property type="entry name" value="Peptidase_S8_subtilisin-like"/>
</dbReference>
<dbReference type="InterPro" id="IPR015500">
    <property type="entry name" value="Peptidase_S8_subtilisin-rel"/>
</dbReference>
<dbReference type="InterPro" id="IPR010259">
    <property type="entry name" value="S8pro/Inhibitor_I9"/>
</dbReference>
<dbReference type="InterPro" id="IPR037045">
    <property type="entry name" value="S8pro/Inhibitor_I9_sf"/>
</dbReference>
<dbReference type="PANTHER" id="PTHR43806">
    <property type="entry name" value="PEPTIDASE S8"/>
    <property type="match status" value="1"/>
</dbReference>
<dbReference type="PANTHER" id="PTHR43806:SF60">
    <property type="entry name" value="PROPROTEIN CONVERTASE SUBTILISIN_KEXIN TYPE 9"/>
    <property type="match status" value="1"/>
</dbReference>
<dbReference type="Pfam" id="PF05922">
    <property type="entry name" value="Inhibitor_I9"/>
    <property type="match status" value="1"/>
</dbReference>
<dbReference type="Pfam" id="PF18459">
    <property type="entry name" value="PCSK9_C1"/>
    <property type="match status" value="1"/>
</dbReference>
<dbReference type="Pfam" id="PF18464">
    <property type="entry name" value="PCSK9_C2"/>
    <property type="match status" value="1"/>
</dbReference>
<dbReference type="Pfam" id="PF18463">
    <property type="entry name" value="PCSK9_C3"/>
    <property type="match status" value="1"/>
</dbReference>
<dbReference type="Pfam" id="PF00082">
    <property type="entry name" value="Peptidase_S8"/>
    <property type="match status" value="1"/>
</dbReference>
<dbReference type="PRINTS" id="PR00723">
    <property type="entry name" value="SUBTILISIN"/>
</dbReference>
<dbReference type="SUPFAM" id="SSF54897">
    <property type="entry name" value="Protease propeptides/inhibitors"/>
    <property type="match status" value="1"/>
</dbReference>
<dbReference type="SUPFAM" id="SSF52743">
    <property type="entry name" value="Subtilisin-like"/>
    <property type="match status" value="1"/>
</dbReference>
<dbReference type="PROSITE" id="PS51892">
    <property type="entry name" value="SUBTILASE"/>
    <property type="match status" value="1"/>
</dbReference>
<protein>
    <recommendedName>
        <fullName>Proprotein convertase subtilisin/kexin type 9</fullName>
        <ecNumber>3.4.21.-</ecNumber>
    </recommendedName>
    <alternativeName>
        <fullName>Proprotein convertase 9</fullName>
        <shortName>PC9</shortName>
    </alternativeName>
    <alternativeName>
        <fullName>Subtilisin/kexin-like protease PC9</fullName>
    </alternativeName>
</protein>
<sequence length="692" mass="74323">MGTVSSRRSWWPLPLLLLLLLLLGPAGARAQEDEDGDYEELVLALRSEEDGLAEAPEHGTTATFHRCAKDPWRLPGTYVVVLKEETHLSQSERTARRLQAQAAHRGYLTKILHVFHGLLPGFLVKMSGDLLELALKLPHVDYIEEDSSVFAQSIPWNLERITPPRYRADEYQPPDGGSLVEVYLLDTSIQSDHREIEGRVMVTDFENVPEEDGTRFHRQASKCDSHGTHLAGVVSGRDAGVAKGASMRSLRVLNCQGKGTVSGTLIGLEFIRKSQLVRPVGPLVVLLPLAGGYSRVLNAACQRLARAGVVLVTAAGNFRDDACLYSPASAPEVITVGATNAQDQPVTLGTLGTNFGRCVDLFAPGEDIIGASSDCSTCFVSQSGTSQAAAHVAGIAAMMLSAEPELTLAELRQRLIHFSAKDVINEAWFPEDQRVLTPNLVAALPPSTHGAGWQLFCRTVWSAHSGPTRMATAVARCAPDEELLSCSSFSRSGKRRGERMEAQGGKLVCRAHNAFGGEGVYAIARCCLLPQANCSVHTAPPAEAGMGTRVHCHQQGHVLTGCSSHWEVEDLGTHKPPVLRPRGQPNQCVGHREASIHASCCRAPGLECKVKEHGIPAPQEQVTVACEEGWTLTGCSALPGTSHVLGAYAVDNTCVVRNRDVSTAGSTSEEAVAAVAICCRSRHLAQASQELQ</sequence>
<organism>
    <name type="scientific">Pan paniscus</name>
    <name type="common">Pygmy chimpanzee</name>
    <name type="synonym">Bonobo</name>
    <dbReference type="NCBI Taxonomy" id="9597"/>
    <lineage>
        <taxon>Eukaryota</taxon>
        <taxon>Metazoa</taxon>
        <taxon>Chordata</taxon>
        <taxon>Craniata</taxon>
        <taxon>Vertebrata</taxon>
        <taxon>Euteleostomi</taxon>
        <taxon>Mammalia</taxon>
        <taxon>Eutheria</taxon>
        <taxon>Euarchontoglires</taxon>
        <taxon>Primates</taxon>
        <taxon>Haplorrhini</taxon>
        <taxon>Catarrhini</taxon>
        <taxon>Hominidae</taxon>
        <taxon>Pan</taxon>
    </lineage>
</organism>
<gene>
    <name type="primary">PCSK9</name>
</gene>
<proteinExistence type="evidence at transcript level"/>
<accession>A8T655</accession>
<keyword id="KW-0053">Apoptosis</keyword>
<keyword id="KW-0068">Autocatalytic cleavage</keyword>
<keyword id="KW-0106">Calcium</keyword>
<keyword id="KW-0153">Cholesterol metabolism</keyword>
<keyword id="KW-0963">Cytoplasm</keyword>
<keyword id="KW-1015">Disulfide bond</keyword>
<keyword id="KW-0256">Endoplasmic reticulum</keyword>
<keyword id="KW-0967">Endosome</keyword>
<keyword id="KW-0325">Glycoprotein</keyword>
<keyword id="KW-0333">Golgi apparatus</keyword>
<keyword id="KW-0378">Hydrolase</keyword>
<keyword id="KW-0443">Lipid metabolism</keyword>
<keyword id="KW-0458">Lysosome</keyword>
<keyword id="KW-0597">Phosphoprotein</keyword>
<keyword id="KW-0645">Protease</keyword>
<keyword id="KW-1185">Reference proteome</keyword>
<keyword id="KW-0964">Secreted</keyword>
<keyword id="KW-0720">Serine protease</keyword>
<keyword id="KW-0732">Signal</keyword>
<keyword id="KW-0753">Steroid metabolism</keyword>
<keyword id="KW-1207">Sterol metabolism</keyword>
<keyword id="KW-0765">Sulfation</keyword>
<keyword id="KW-0865">Zymogen</keyword>
<evidence type="ECO:0000250" key="1"/>
<evidence type="ECO:0000250" key="2">
    <source>
        <dbReference type="UniProtKB" id="Q8NBP7"/>
    </source>
</evidence>
<evidence type="ECO:0000255" key="3"/>
<evidence type="ECO:0000255" key="4">
    <source>
        <dbReference type="PROSITE-ProRule" id="PRU01240"/>
    </source>
</evidence>
<evidence type="ECO:0000305" key="5"/>
<comment type="function">
    <text evidence="1">Crucial player in the regulation of plasma cholesterol homeostasis. Binds to low-density lipid receptor family members: low density lipoprotein receptor (LDLR), very low density lipoprotein receptor (VLDLR), apolipoprotein E receptor (LRP1/APOER) and apolipoprotein receptor 2 (LRP8/APOER2), and promotes their degradation in intracellular acidic compartments. Acts via a non-proteolytic mechanism to enhance the degradation of the hepatic LDLR through a clathrin LDLRAP1/ARH-mediated pathway. May prevent the recycling of LDLR from endosomes to the cell surface or direct it to lysosomes for degradation. Can induce ubiquitination of LDLR leading to its subsequent degradation. Inhibits intracellular degradation of APOB via the autophagosome/lysosome pathway in a LDLR-independent manner. Involved in the disposal of non-acetylated intermediates of BACE1 in the early secretory pathway. Inhibits epithelial Na(+) channel (ENaC)-mediated Na(+) absorption by reducing ENaC surface expression primarily by increasing its proteasomal degradation. Regulates neuronal apoptosis via modulation of LRP8/APOER2 levels and related anti-apoptotic signaling pathways (By similarity).</text>
</comment>
<comment type="cofactor">
    <cofactor evidence="1">
        <name>Ca(2+)</name>
        <dbReference type="ChEBI" id="CHEBI:29108"/>
    </cofactor>
</comment>
<comment type="activity regulation">
    <text evidence="1">Its proteolytic activity is autoinhibited by the non-covalent binding of the propeptide to the catalytic domain. Inhibited by EGTA (By similarity).</text>
</comment>
<comment type="subunit">
    <text evidence="2">Monomer. Can self-associate to form dimers and higher multimers which may have increased LDLR degrading activity. The precursor protein but not the mature protein may form multimers. Interacts with APOB, VLDLR, LRP8/APOER2 and BACE1. The full-length immature form (pro-PCSK9) interacts with SCNN1A, SCNN1B and SCNN1G. The pro-PCSK9 form (via C-terminal domain) interacts with LDLR. Interacts (via the C-terminal domain) with ANXA2 (via repeat Annexin 1); the interaction inhibits the degradation of LDLR.</text>
</comment>
<comment type="subcellular location">
    <subcellularLocation>
        <location evidence="1">Cytoplasm</location>
    </subcellularLocation>
    <subcellularLocation>
        <location evidence="1">Secreted</location>
    </subcellularLocation>
    <subcellularLocation>
        <location evidence="1">Endosome</location>
    </subcellularLocation>
    <subcellularLocation>
        <location evidence="1">Lysosome</location>
    </subcellularLocation>
    <subcellularLocation>
        <location evidence="1">Cell surface</location>
    </subcellularLocation>
    <subcellularLocation>
        <location evidence="1">Endoplasmic reticulum</location>
    </subcellularLocation>
    <subcellularLocation>
        <location evidence="1">Golgi apparatus</location>
    </subcellularLocation>
    <text evidence="1">Autocatalytic cleavage is required to transport it from the endoplasmic reticulum to the Golgi apparatus and for the secretion of the mature protein. Localizes to the endoplasmic reticulum in the absence of LDLR and colocalizes to the cell surface and to the endosomes/lysosomes in the presence of LDLR. The sorting to the cell surface and endosomes is required in order to fully promote LDLR degradation (By similarity).</text>
</comment>
<comment type="domain">
    <text evidence="1">The C-terminal domain (CRD) is essential for the LDLR-binding and degrading activities.</text>
</comment>
<comment type="domain">
    <text evidence="1">The catalytic domain is responsible for mediating its self-association.</text>
</comment>
<comment type="PTM">
    <text evidence="1">Cleavage by furin and PCSK5 generates a truncated inactive protein that is unable to induce LDLR degradation.</text>
</comment>
<comment type="PTM">
    <text evidence="1">Undergoes autocatalytic cleavage in the endoplasmic reticulum to release the propeptide from the N-terminus and the cleavage of the propeptide is strictly required for its maturation and activation. The cleaved propeptide however remains associated with the catalytic domain through non-covalent interactions, preventing potential substrates from accessing its active site. As a result, it is secreted from cells as a propeptide-containing, enzymatically inactive protein (By similarity).</text>
</comment>
<comment type="PTM">
    <text evidence="1">Phosphorylation protects the propeptide against proteolysis.</text>
</comment>
<comment type="similarity">
    <text evidence="5">Belongs to the peptidase S8 family.</text>
</comment>
<reference key="1">
    <citation type="journal article" date="2007" name="PLoS ONE">
        <title>Evidence for positive selection in the C-terminal domain of the cholesterol metabolism gene PCSK9 based on phylogenetic analysis in 14 primate species.</title>
        <authorList>
            <person name="Ding K."/>
            <person name="McDonough S.J."/>
            <person name="Kullo I.J."/>
        </authorList>
    </citation>
    <scope>NUCLEOTIDE SEQUENCE [MRNA]</scope>
</reference>
<reference key="2">
    <citation type="submission" date="2008-01" db="EMBL/GenBank/DDBJ databases">
        <authorList>
            <person name="Ding K."/>
            <person name="McDonough S.J."/>
            <person name="Kullo I.J."/>
        </authorList>
    </citation>
    <scope>SEQUENCE REVISION TO 15-16; 104; 278; 499; 602; 649-650; 658; 664; 666; 672 AND 685</scope>
</reference>
<feature type="signal peptide" evidence="1">
    <location>
        <begin position="1"/>
        <end position="30"/>
    </location>
</feature>
<feature type="propeptide" id="PRO_0000318288" evidence="1">
    <location>
        <begin position="31"/>
        <end position="152"/>
    </location>
</feature>
<feature type="chain" id="PRO_0000318289" description="Proprotein convertase subtilisin/kexin type 9">
    <location>
        <begin position="153"/>
        <end position="692"/>
    </location>
</feature>
<feature type="domain" description="Inhibitor I9" evidence="3">
    <location>
        <begin position="77"/>
        <end position="149"/>
    </location>
</feature>
<feature type="domain" description="Peptidase S8" evidence="4">
    <location>
        <begin position="155"/>
        <end position="461"/>
    </location>
</feature>
<feature type="region of interest" description="C-terminal domain" evidence="1">
    <location>
        <begin position="450"/>
        <end position="692"/>
    </location>
</feature>
<feature type="active site" description="Charge relay system" evidence="4">
    <location>
        <position position="186"/>
    </location>
</feature>
<feature type="active site" description="Charge relay system" evidence="4">
    <location>
        <position position="226"/>
    </location>
</feature>
<feature type="active site" description="Charge relay system" evidence="4">
    <location>
        <position position="386"/>
    </location>
</feature>
<feature type="site" description="Cleavage; by autolysis" evidence="1">
    <location>
        <begin position="152"/>
        <end position="153"/>
    </location>
</feature>
<feature type="site" description="Cleavage; by furin and PCSK5" evidence="1">
    <location>
        <begin position="218"/>
        <end position="219"/>
    </location>
</feature>
<feature type="modified residue" description="Sulfotyrosine" evidence="1">
    <location>
        <position position="38"/>
    </location>
</feature>
<feature type="modified residue" description="Phosphoserine" evidence="2">
    <location>
        <position position="47"/>
    </location>
</feature>
<feature type="modified residue" description="Phosphoserine" evidence="2">
    <location>
        <position position="688"/>
    </location>
</feature>
<feature type="glycosylation site" description="N-linked (GlcNAc...) asparagine" evidence="3">
    <location>
        <position position="533"/>
    </location>
</feature>
<feature type="disulfide bond" evidence="3">
    <location>
        <begin position="223"/>
        <end position="255"/>
    </location>
</feature>
<feature type="disulfide bond" evidence="3">
    <location>
        <begin position="323"/>
        <end position="358"/>
    </location>
</feature>
<feature type="disulfide bond" evidence="3">
    <location>
        <begin position="457"/>
        <end position="527"/>
    </location>
</feature>
<feature type="disulfide bond" evidence="3">
    <location>
        <begin position="477"/>
        <end position="526"/>
    </location>
</feature>
<feature type="disulfide bond" evidence="3">
    <location>
        <begin position="486"/>
        <end position="509"/>
    </location>
</feature>
<feature type="disulfide bond" evidence="3">
    <location>
        <begin position="534"/>
        <end position="601"/>
    </location>
</feature>
<feature type="disulfide bond" evidence="3">
    <location>
        <begin position="552"/>
        <end position="600"/>
    </location>
</feature>
<feature type="disulfide bond" evidence="3">
    <location>
        <begin position="562"/>
        <end position="588"/>
    </location>
</feature>
<feature type="disulfide bond" evidence="3">
    <location>
        <begin position="608"/>
        <end position="679"/>
    </location>
</feature>
<feature type="disulfide bond" evidence="3">
    <location>
        <begin position="626"/>
        <end position="678"/>
    </location>
</feature>
<feature type="disulfide bond" evidence="3">
    <location>
        <begin position="635"/>
        <end position="654"/>
    </location>
</feature>